<gene>
    <name evidence="1" type="primary">panB</name>
    <name type="ordered locus">VP2506</name>
</gene>
<evidence type="ECO:0000255" key="1">
    <source>
        <dbReference type="HAMAP-Rule" id="MF_00156"/>
    </source>
</evidence>
<organism>
    <name type="scientific">Vibrio parahaemolyticus serotype O3:K6 (strain RIMD 2210633)</name>
    <dbReference type="NCBI Taxonomy" id="223926"/>
    <lineage>
        <taxon>Bacteria</taxon>
        <taxon>Pseudomonadati</taxon>
        <taxon>Pseudomonadota</taxon>
        <taxon>Gammaproteobacteria</taxon>
        <taxon>Vibrionales</taxon>
        <taxon>Vibrionaceae</taxon>
        <taxon>Vibrio</taxon>
    </lineage>
</organism>
<accession>Q87LV2</accession>
<protein>
    <recommendedName>
        <fullName evidence="1">3-methyl-2-oxobutanoate hydroxymethyltransferase</fullName>
        <ecNumber evidence="1">2.1.2.11</ecNumber>
    </recommendedName>
    <alternativeName>
        <fullName evidence="1">Ketopantoate hydroxymethyltransferase</fullName>
        <shortName evidence="1">KPHMT</shortName>
    </alternativeName>
</protein>
<name>PANB_VIBPA</name>
<comment type="function">
    <text evidence="1">Catalyzes the reversible reaction in which hydroxymethyl group from 5,10-methylenetetrahydrofolate is transferred onto alpha-ketoisovalerate to form ketopantoate.</text>
</comment>
<comment type="catalytic activity">
    <reaction evidence="1">
        <text>3-methyl-2-oxobutanoate + (6R)-5,10-methylene-5,6,7,8-tetrahydrofolate + H2O = 2-dehydropantoate + (6S)-5,6,7,8-tetrahydrofolate</text>
        <dbReference type="Rhea" id="RHEA:11824"/>
        <dbReference type="ChEBI" id="CHEBI:11561"/>
        <dbReference type="ChEBI" id="CHEBI:11851"/>
        <dbReference type="ChEBI" id="CHEBI:15377"/>
        <dbReference type="ChEBI" id="CHEBI:15636"/>
        <dbReference type="ChEBI" id="CHEBI:57453"/>
        <dbReference type="EC" id="2.1.2.11"/>
    </reaction>
</comment>
<comment type="cofactor">
    <cofactor evidence="1">
        <name>Mg(2+)</name>
        <dbReference type="ChEBI" id="CHEBI:18420"/>
    </cofactor>
    <text evidence="1">Binds 1 Mg(2+) ion per subunit.</text>
</comment>
<comment type="pathway">
    <text evidence="1">Cofactor biosynthesis; (R)-pantothenate biosynthesis; (R)-pantoate from 3-methyl-2-oxobutanoate: step 1/2.</text>
</comment>
<comment type="subunit">
    <text evidence="1">Homodecamer; pentamer of dimers.</text>
</comment>
<comment type="subcellular location">
    <subcellularLocation>
        <location evidence="1">Cytoplasm</location>
    </subcellularLocation>
</comment>
<comment type="similarity">
    <text evidence="1">Belongs to the PanB family.</text>
</comment>
<proteinExistence type="inferred from homology"/>
<keyword id="KW-0963">Cytoplasm</keyword>
<keyword id="KW-0460">Magnesium</keyword>
<keyword id="KW-0479">Metal-binding</keyword>
<keyword id="KW-0566">Pantothenate biosynthesis</keyword>
<keyword id="KW-0808">Transferase</keyword>
<feature type="chain" id="PRO_0000184904" description="3-methyl-2-oxobutanoate hydroxymethyltransferase">
    <location>
        <begin position="1"/>
        <end position="264"/>
    </location>
</feature>
<feature type="active site" description="Proton acceptor" evidence="1">
    <location>
        <position position="181"/>
    </location>
</feature>
<feature type="binding site" evidence="1">
    <location>
        <begin position="45"/>
        <end position="46"/>
    </location>
    <ligand>
        <name>3-methyl-2-oxobutanoate</name>
        <dbReference type="ChEBI" id="CHEBI:11851"/>
    </ligand>
</feature>
<feature type="binding site" evidence="1">
    <location>
        <position position="45"/>
    </location>
    <ligand>
        <name>Mg(2+)</name>
        <dbReference type="ChEBI" id="CHEBI:18420"/>
    </ligand>
</feature>
<feature type="binding site" evidence="1">
    <location>
        <position position="84"/>
    </location>
    <ligand>
        <name>3-methyl-2-oxobutanoate</name>
        <dbReference type="ChEBI" id="CHEBI:11851"/>
    </ligand>
</feature>
<feature type="binding site" evidence="1">
    <location>
        <position position="84"/>
    </location>
    <ligand>
        <name>Mg(2+)</name>
        <dbReference type="ChEBI" id="CHEBI:18420"/>
    </ligand>
</feature>
<feature type="binding site" evidence="1">
    <location>
        <position position="112"/>
    </location>
    <ligand>
        <name>3-methyl-2-oxobutanoate</name>
        <dbReference type="ChEBI" id="CHEBI:11851"/>
    </ligand>
</feature>
<feature type="binding site" evidence="1">
    <location>
        <position position="114"/>
    </location>
    <ligand>
        <name>Mg(2+)</name>
        <dbReference type="ChEBI" id="CHEBI:18420"/>
    </ligand>
</feature>
<sequence>MKKMTINDLIKWKQEGRKFATSTAYDASFAQLFESQEMPVLLVGDSLGMVLQGENDTLPVTVDDIVYHTRCVRAGSPNCLLMADMPFMSYATPEQACENAAKLMRAGANMVKIEGGDWLVDTVKMLTERAVPVCAHLGLTPQSVNIFGGYKIQGRDQEKADRMVKDALALQEAGAQIVLLECVPAELAERITKVLDVPVIGIGAGNVTDGQILVMHDMFGISANYMPKFSKNFLAETGDMRKAVAKYIEDVANGVFPDDAHTIA</sequence>
<reference key="1">
    <citation type="journal article" date="2003" name="Lancet">
        <title>Genome sequence of Vibrio parahaemolyticus: a pathogenic mechanism distinct from that of V. cholerae.</title>
        <authorList>
            <person name="Makino K."/>
            <person name="Oshima K."/>
            <person name="Kurokawa K."/>
            <person name="Yokoyama K."/>
            <person name="Uda T."/>
            <person name="Tagomori K."/>
            <person name="Iijima Y."/>
            <person name="Najima M."/>
            <person name="Nakano M."/>
            <person name="Yamashita A."/>
            <person name="Kubota Y."/>
            <person name="Kimura S."/>
            <person name="Yasunaga T."/>
            <person name="Honda T."/>
            <person name="Shinagawa H."/>
            <person name="Hattori M."/>
            <person name="Iida T."/>
        </authorList>
    </citation>
    <scope>NUCLEOTIDE SEQUENCE [LARGE SCALE GENOMIC DNA]</scope>
    <source>
        <strain>RIMD 2210633</strain>
    </source>
</reference>
<dbReference type="EC" id="2.1.2.11" evidence="1"/>
<dbReference type="EMBL" id="BA000031">
    <property type="protein sequence ID" value="BAC60769.1"/>
    <property type="molecule type" value="Genomic_DNA"/>
</dbReference>
<dbReference type="RefSeq" id="NP_798885.1">
    <property type="nucleotide sequence ID" value="NC_004603.1"/>
</dbReference>
<dbReference type="RefSeq" id="WP_005454450.1">
    <property type="nucleotide sequence ID" value="NC_004603.1"/>
</dbReference>
<dbReference type="SMR" id="Q87LV2"/>
<dbReference type="GeneID" id="1190021"/>
<dbReference type="KEGG" id="vpa:VP2506"/>
<dbReference type="PATRIC" id="fig|223926.6.peg.2405"/>
<dbReference type="eggNOG" id="COG0413">
    <property type="taxonomic scope" value="Bacteria"/>
</dbReference>
<dbReference type="HOGENOM" id="CLU_036645_1_0_6"/>
<dbReference type="UniPathway" id="UPA00028">
    <property type="reaction ID" value="UER00003"/>
</dbReference>
<dbReference type="Proteomes" id="UP000002493">
    <property type="component" value="Chromosome 1"/>
</dbReference>
<dbReference type="GO" id="GO:0005737">
    <property type="term" value="C:cytoplasm"/>
    <property type="evidence" value="ECO:0007669"/>
    <property type="project" value="UniProtKB-SubCell"/>
</dbReference>
<dbReference type="GO" id="GO:0003864">
    <property type="term" value="F:3-methyl-2-oxobutanoate hydroxymethyltransferase activity"/>
    <property type="evidence" value="ECO:0007669"/>
    <property type="project" value="UniProtKB-UniRule"/>
</dbReference>
<dbReference type="GO" id="GO:0000287">
    <property type="term" value="F:magnesium ion binding"/>
    <property type="evidence" value="ECO:0007669"/>
    <property type="project" value="TreeGrafter"/>
</dbReference>
<dbReference type="GO" id="GO:0015940">
    <property type="term" value="P:pantothenate biosynthetic process"/>
    <property type="evidence" value="ECO:0007669"/>
    <property type="project" value="UniProtKB-UniRule"/>
</dbReference>
<dbReference type="CDD" id="cd06557">
    <property type="entry name" value="KPHMT-like"/>
    <property type="match status" value="1"/>
</dbReference>
<dbReference type="FunFam" id="3.20.20.60:FF:000003">
    <property type="entry name" value="3-methyl-2-oxobutanoate hydroxymethyltransferase"/>
    <property type="match status" value="1"/>
</dbReference>
<dbReference type="Gene3D" id="3.20.20.60">
    <property type="entry name" value="Phosphoenolpyruvate-binding domains"/>
    <property type="match status" value="1"/>
</dbReference>
<dbReference type="HAMAP" id="MF_00156">
    <property type="entry name" value="PanB"/>
    <property type="match status" value="1"/>
</dbReference>
<dbReference type="InterPro" id="IPR003700">
    <property type="entry name" value="Pantoate_hydroxy_MeTrfase"/>
</dbReference>
<dbReference type="InterPro" id="IPR015813">
    <property type="entry name" value="Pyrv/PenolPyrv_kinase-like_dom"/>
</dbReference>
<dbReference type="InterPro" id="IPR040442">
    <property type="entry name" value="Pyrv_kinase-like_dom_sf"/>
</dbReference>
<dbReference type="NCBIfam" id="TIGR00222">
    <property type="entry name" value="panB"/>
    <property type="match status" value="1"/>
</dbReference>
<dbReference type="NCBIfam" id="NF001452">
    <property type="entry name" value="PRK00311.1"/>
    <property type="match status" value="1"/>
</dbReference>
<dbReference type="PANTHER" id="PTHR20881">
    <property type="entry name" value="3-METHYL-2-OXOBUTANOATE HYDROXYMETHYLTRANSFERASE"/>
    <property type="match status" value="1"/>
</dbReference>
<dbReference type="PANTHER" id="PTHR20881:SF0">
    <property type="entry name" value="3-METHYL-2-OXOBUTANOATE HYDROXYMETHYLTRANSFERASE"/>
    <property type="match status" value="1"/>
</dbReference>
<dbReference type="Pfam" id="PF02548">
    <property type="entry name" value="Pantoate_transf"/>
    <property type="match status" value="1"/>
</dbReference>
<dbReference type="PIRSF" id="PIRSF000388">
    <property type="entry name" value="Pantoate_hydroxy_MeTrfase"/>
    <property type="match status" value="1"/>
</dbReference>
<dbReference type="SUPFAM" id="SSF51621">
    <property type="entry name" value="Phosphoenolpyruvate/pyruvate domain"/>
    <property type="match status" value="1"/>
</dbReference>